<organism>
    <name type="scientific">Drosophila melanogaster</name>
    <name type="common">Fruit fly</name>
    <dbReference type="NCBI Taxonomy" id="7227"/>
    <lineage>
        <taxon>Eukaryota</taxon>
        <taxon>Metazoa</taxon>
        <taxon>Ecdysozoa</taxon>
        <taxon>Arthropoda</taxon>
        <taxon>Hexapoda</taxon>
        <taxon>Insecta</taxon>
        <taxon>Pterygota</taxon>
        <taxon>Neoptera</taxon>
        <taxon>Endopterygota</taxon>
        <taxon>Diptera</taxon>
        <taxon>Brachycera</taxon>
        <taxon>Muscomorpha</taxon>
        <taxon>Ephydroidea</taxon>
        <taxon>Drosophilidae</taxon>
        <taxon>Drosophila</taxon>
        <taxon>Sophophora</taxon>
    </lineage>
</organism>
<accession>Q7JRJ1</accession>
<accession>E1JGZ1</accession>
<accession>Q86PA3</accession>
<keyword id="KW-0010">Activator</keyword>
<keyword id="KW-0025">Alternative splicing</keyword>
<keyword id="KW-0217">Developmental protein</keyword>
<keyword id="KW-0539">Nucleus</keyword>
<keyword id="KW-0597">Phosphoprotein</keyword>
<keyword id="KW-1185">Reference proteome</keyword>
<keyword id="KW-0804">Transcription</keyword>
<keyword id="KW-0805">Transcription regulation</keyword>
<evidence type="ECO:0000250" key="1"/>
<evidence type="ECO:0000256" key="2">
    <source>
        <dbReference type="SAM" id="MobiDB-lite"/>
    </source>
</evidence>
<evidence type="ECO:0000269" key="3">
    <source>
    </source>
</evidence>
<evidence type="ECO:0000269" key="4">
    <source>
    </source>
</evidence>
<evidence type="ECO:0000269" key="5">
    <source>
    </source>
</evidence>
<evidence type="ECO:0000303" key="6">
    <source ref="4"/>
</evidence>
<evidence type="ECO:0000305" key="7"/>
<evidence type="ECO:0000312" key="8">
    <source>
        <dbReference type="FlyBase" id="FBgn0033166"/>
    </source>
</evidence>
<proteinExistence type="evidence at protein level"/>
<reference key="1">
    <citation type="journal article" date="2000" name="Science">
        <title>The genome sequence of Drosophila melanogaster.</title>
        <authorList>
            <person name="Adams M.D."/>
            <person name="Celniker S.E."/>
            <person name="Holt R.A."/>
            <person name="Evans C.A."/>
            <person name="Gocayne J.D."/>
            <person name="Amanatides P.G."/>
            <person name="Scherer S.E."/>
            <person name="Li P.W."/>
            <person name="Hoskins R.A."/>
            <person name="Galle R.F."/>
            <person name="George R.A."/>
            <person name="Lewis S.E."/>
            <person name="Richards S."/>
            <person name="Ashburner M."/>
            <person name="Henderson S.N."/>
            <person name="Sutton G.G."/>
            <person name="Wortman J.R."/>
            <person name="Yandell M.D."/>
            <person name="Zhang Q."/>
            <person name="Chen L.X."/>
            <person name="Brandon R.C."/>
            <person name="Rogers Y.-H.C."/>
            <person name="Blazej R.G."/>
            <person name="Champe M."/>
            <person name="Pfeiffer B.D."/>
            <person name="Wan K.H."/>
            <person name="Doyle C."/>
            <person name="Baxter E.G."/>
            <person name="Helt G."/>
            <person name="Nelson C.R."/>
            <person name="Miklos G.L.G."/>
            <person name="Abril J.F."/>
            <person name="Agbayani A."/>
            <person name="An H.-J."/>
            <person name="Andrews-Pfannkoch C."/>
            <person name="Baldwin D."/>
            <person name="Ballew R.M."/>
            <person name="Basu A."/>
            <person name="Baxendale J."/>
            <person name="Bayraktaroglu L."/>
            <person name="Beasley E.M."/>
            <person name="Beeson K.Y."/>
            <person name="Benos P.V."/>
            <person name="Berman B.P."/>
            <person name="Bhandari D."/>
            <person name="Bolshakov S."/>
            <person name="Borkova D."/>
            <person name="Botchan M.R."/>
            <person name="Bouck J."/>
            <person name="Brokstein P."/>
            <person name="Brottier P."/>
            <person name="Burtis K.C."/>
            <person name="Busam D.A."/>
            <person name="Butler H."/>
            <person name="Cadieu E."/>
            <person name="Center A."/>
            <person name="Chandra I."/>
            <person name="Cherry J.M."/>
            <person name="Cawley S."/>
            <person name="Dahlke C."/>
            <person name="Davenport L.B."/>
            <person name="Davies P."/>
            <person name="de Pablos B."/>
            <person name="Delcher A."/>
            <person name="Deng Z."/>
            <person name="Mays A.D."/>
            <person name="Dew I."/>
            <person name="Dietz S.M."/>
            <person name="Dodson K."/>
            <person name="Doup L.E."/>
            <person name="Downes M."/>
            <person name="Dugan-Rocha S."/>
            <person name="Dunkov B.C."/>
            <person name="Dunn P."/>
            <person name="Durbin K.J."/>
            <person name="Evangelista C.C."/>
            <person name="Ferraz C."/>
            <person name="Ferriera S."/>
            <person name="Fleischmann W."/>
            <person name="Fosler C."/>
            <person name="Gabrielian A.E."/>
            <person name="Garg N.S."/>
            <person name="Gelbart W.M."/>
            <person name="Glasser K."/>
            <person name="Glodek A."/>
            <person name="Gong F."/>
            <person name="Gorrell J.H."/>
            <person name="Gu Z."/>
            <person name="Guan P."/>
            <person name="Harris M."/>
            <person name="Harris N.L."/>
            <person name="Harvey D.A."/>
            <person name="Heiman T.J."/>
            <person name="Hernandez J.R."/>
            <person name="Houck J."/>
            <person name="Hostin D."/>
            <person name="Houston K.A."/>
            <person name="Howland T.J."/>
            <person name="Wei M.-H."/>
            <person name="Ibegwam C."/>
            <person name="Jalali M."/>
            <person name="Kalush F."/>
            <person name="Karpen G.H."/>
            <person name="Ke Z."/>
            <person name="Kennison J.A."/>
            <person name="Ketchum K.A."/>
            <person name="Kimmel B.E."/>
            <person name="Kodira C.D."/>
            <person name="Kraft C.L."/>
            <person name="Kravitz S."/>
            <person name="Kulp D."/>
            <person name="Lai Z."/>
            <person name="Lasko P."/>
            <person name="Lei Y."/>
            <person name="Levitsky A.A."/>
            <person name="Li J.H."/>
            <person name="Li Z."/>
            <person name="Liang Y."/>
            <person name="Lin X."/>
            <person name="Liu X."/>
            <person name="Mattei B."/>
            <person name="McIntosh T.C."/>
            <person name="McLeod M.P."/>
            <person name="McPherson D."/>
            <person name="Merkulov G."/>
            <person name="Milshina N.V."/>
            <person name="Mobarry C."/>
            <person name="Morris J."/>
            <person name="Moshrefi A."/>
            <person name="Mount S.M."/>
            <person name="Moy M."/>
            <person name="Murphy B."/>
            <person name="Murphy L."/>
            <person name="Muzny D.M."/>
            <person name="Nelson D.L."/>
            <person name="Nelson D.R."/>
            <person name="Nelson K.A."/>
            <person name="Nixon K."/>
            <person name="Nusskern D.R."/>
            <person name="Pacleb J.M."/>
            <person name="Palazzolo M."/>
            <person name="Pittman G.S."/>
            <person name="Pan S."/>
            <person name="Pollard J."/>
            <person name="Puri V."/>
            <person name="Reese M.G."/>
            <person name="Reinert K."/>
            <person name="Remington K."/>
            <person name="Saunders R.D.C."/>
            <person name="Scheeler F."/>
            <person name="Shen H."/>
            <person name="Shue B.C."/>
            <person name="Siden-Kiamos I."/>
            <person name="Simpson M."/>
            <person name="Skupski M.P."/>
            <person name="Smith T.J."/>
            <person name="Spier E."/>
            <person name="Spradling A.C."/>
            <person name="Stapleton M."/>
            <person name="Strong R."/>
            <person name="Sun E."/>
            <person name="Svirskas R."/>
            <person name="Tector C."/>
            <person name="Turner R."/>
            <person name="Venter E."/>
            <person name="Wang A.H."/>
            <person name="Wang X."/>
            <person name="Wang Z.-Y."/>
            <person name="Wassarman D.A."/>
            <person name="Weinstock G.M."/>
            <person name="Weissenbach J."/>
            <person name="Williams S.M."/>
            <person name="Woodage T."/>
            <person name="Worley K.C."/>
            <person name="Wu D."/>
            <person name="Yang S."/>
            <person name="Yao Q.A."/>
            <person name="Ye J."/>
            <person name="Yeh R.-F."/>
            <person name="Zaveri J.S."/>
            <person name="Zhan M."/>
            <person name="Zhang G."/>
            <person name="Zhao Q."/>
            <person name="Zheng L."/>
            <person name="Zheng X.H."/>
            <person name="Zhong F.N."/>
            <person name="Zhong W."/>
            <person name="Zhou X."/>
            <person name="Zhu S.C."/>
            <person name="Zhu X."/>
            <person name="Smith H.O."/>
            <person name="Gibbs R.A."/>
            <person name="Myers E.W."/>
            <person name="Rubin G.M."/>
            <person name="Venter J.C."/>
        </authorList>
    </citation>
    <scope>NUCLEOTIDE SEQUENCE [LARGE SCALE GENOMIC DNA]</scope>
    <source>
        <strain>Berkeley</strain>
    </source>
</reference>
<reference key="2">
    <citation type="journal article" date="2002" name="Genome Biol.">
        <title>Annotation of the Drosophila melanogaster euchromatic genome: a systematic review.</title>
        <authorList>
            <person name="Misra S."/>
            <person name="Crosby M.A."/>
            <person name="Mungall C.J."/>
            <person name="Matthews B.B."/>
            <person name="Campbell K.S."/>
            <person name="Hradecky P."/>
            <person name="Huang Y."/>
            <person name="Kaminker J.S."/>
            <person name="Millburn G.H."/>
            <person name="Prochnik S.E."/>
            <person name="Smith C.D."/>
            <person name="Tupy J.L."/>
            <person name="Whitfield E.J."/>
            <person name="Bayraktaroglu L."/>
            <person name="Berman B.P."/>
            <person name="Bettencourt B.R."/>
            <person name="Celniker S.E."/>
            <person name="de Grey A.D.N.J."/>
            <person name="Drysdale R.A."/>
            <person name="Harris N.L."/>
            <person name="Richter J."/>
            <person name="Russo S."/>
            <person name="Schroeder A.J."/>
            <person name="Shu S.Q."/>
            <person name="Stapleton M."/>
            <person name="Yamada C."/>
            <person name="Ashburner M."/>
            <person name="Gelbart W.M."/>
            <person name="Rubin G.M."/>
            <person name="Lewis S.E."/>
        </authorList>
    </citation>
    <scope>GENOME REANNOTATION</scope>
    <source>
        <strain>Berkeley</strain>
    </source>
</reference>
<reference key="3">
    <citation type="journal article" date="2002" name="Genome Biol.">
        <title>A Drosophila full-length cDNA resource.</title>
        <authorList>
            <person name="Stapleton M."/>
            <person name="Carlson J.W."/>
            <person name="Brokstein P."/>
            <person name="Yu C."/>
            <person name="Champe M."/>
            <person name="George R.A."/>
            <person name="Guarin H."/>
            <person name="Kronmiller B."/>
            <person name="Pacleb J.M."/>
            <person name="Park S."/>
            <person name="Wan K.H."/>
            <person name="Rubin G.M."/>
            <person name="Celniker S.E."/>
        </authorList>
    </citation>
    <scope>NUCLEOTIDE SEQUENCE [LARGE SCALE MRNA] (ISOFORM A)</scope>
    <source>
        <strain>Berkeley</strain>
        <tissue>Embryo</tissue>
    </source>
</reference>
<reference key="4">
    <citation type="submission" date="2003-01" db="EMBL/GenBank/DDBJ databases">
        <authorList>
            <person name="Stapleton M."/>
            <person name="Brokstein P."/>
            <person name="Hong L."/>
            <person name="Agbayani A."/>
            <person name="Carlson J.W."/>
            <person name="Champe M."/>
            <person name="Chavez C."/>
            <person name="Dorsett V."/>
            <person name="Dresnek D."/>
            <person name="Farfan D."/>
            <person name="Frise E."/>
            <person name="George R.A."/>
            <person name="Gonzalez M."/>
            <person name="Guarin H."/>
            <person name="Kronmiller B."/>
            <person name="Li P.W."/>
            <person name="Liao G."/>
            <person name="Miranda A."/>
            <person name="Mungall C.J."/>
            <person name="Nunoo J."/>
            <person name="Pacleb J.M."/>
            <person name="Paragas V."/>
            <person name="Park S."/>
            <person name="Patel S."/>
            <person name="Phouanenavong S."/>
            <person name="Wan K.H."/>
            <person name="Yu C."/>
            <person name="Lewis S.E."/>
            <person name="Rubin G.M."/>
            <person name="Celniker S.E."/>
        </authorList>
    </citation>
    <scope>NUCLEOTIDE SEQUENCE [LARGE SCALE MRNA] (ISOFORM B)</scope>
    <source>
        <strain>Berkeley</strain>
        <tissue>Embryo</tissue>
    </source>
</reference>
<reference key="5">
    <citation type="journal article" date="2008" name="J. Proteome Res.">
        <title>Phosphoproteome analysis of Drosophila melanogaster embryos.</title>
        <authorList>
            <person name="Zhai B."/>
            <person name="Villen J."/>
            <person name="Beausoleil S.A."/>
            <person name="Mintseris J."/>
            <person name="Gygi S.P."/>
        </authorList>
    </citation>
    <scope>PHOSPHORYLATION [LARGE SCALE ANALYSIS] AT SER-194</scope>
    <scope>IDENTIFICATION BY MASS SPECTROMETRY</scope>
    <source>
        <tissue>Embryo</tissue>
    </source>
</reference>
<reference key="6">
    <citation type="journal article" date="2008" name="Proc. Natl. Acad. Sci. U.S.A.">
        <title>Regulation of the transcriptional activity of poised RNA polymerase II by the elongation factor ELL.</title>
        <authorList>
            <person name="Smith E.R."/>
            <person name="Winter B."/>
            <person name="Eissenberg J.C."/>
            <person name="Shilatifard A."/>
        </authorList>
    </citation>
    <scope>FUNCTION</scope>
    <scope>DISRUPTION PHENOTYPE</scope>
</reference>
<reference key="7">
    <citation type="journal article" date="2011" name="Mol. Cell">
        <title>The little elongation complex regulates small nuclear RNA transcription.</title>
        <authorList>
            <person name="Smith E.R."/>
            <person name="Lin C."/>
            <person name="Garrett A.S."/>
            <person name="Thornton J."/>
            <person name="Mohaghegh N."/>
            <person name="Hu D."/>
            <person name="Jackson J."/>
            <person name="Saraf A."/>
            <person name="Swanson S.K."/>
            <person name="Seidel C."/>
            <person name="Florens L."/>
            <person name="Washburn M.P."/>
            <person name="Eissenberg J.C."/>
            <person name="Shilatifard A."/>
        </authorList>
    </citation>
    <scope>IDENTIFICATION IN THE LEC COMPLEX</scope>
</reference>
<gene>
    <name type="primary">Eaf</name>
    <name type="ORF">CG11166</name>
</gene>
<protein>
    <recommendedName>
        <fullName>Ell-associated factor Eaf</fullName>
        <shortName>dEaf</shortName>
    </recommendedName>
</protein>
<name>EAF_DROME</name>
<dbReference type="EMBL" id="AE013599">
    <property type="protein sequence ID" value="AAF59263.2"/>
    <property type="molecule type" value="Genomic_DNA"/>
</dbReference>
<dbReference type="EMBL" id="AE013599">
    <property type="protein sequence ID" value="AAF59266.2"/>
    <property type="molecule type" value="Genomic_DNA"/>
</dbReference>
<dbReference type="EMBL" id="AE013599">
    <property type="protein sequence ID" value="AAM68888.1"/>
    <property type="molecule type" value="Genomic_DNA"/>
</dbReference>
<dbReference type="EMBL" id="AE013599">
    <property type="protein sequence ID" value="AAM68889.1"/>
    <property type="molecule type" value="Genomic_DNA"/>
</dbReference>
<dbReference type="EMBL" id="BT001503">
    <property type="protein sequence ID" value="AAN71258.1"/>
    <property type="molecule type" value="mRNA"/>
</dbReference>
<dbReference type="EMBL" id="BT001556">
    <property type="protein sequence ID" value="AAN71311.1"/>
    <property type="molecule type" value="mRNA"/>
</dbReference>
<dbReference type="EMBL" id="BT003263">
    <property type="protein sequence ID" value="AAO25020.1"/>
    <property type="molecule type" value="mRNA"/>
</dbReference>
<dbReference type="RefSeq" id="NP_610273.1">
    <molecule id="Q7JRJ1-1"/>
    <property type="nucleotide sequence ID" value="NM_136429.4"/>
</dbReference>
<dbReference type="RefSeq" id="NP_724547.1">
    <molecule id="Q7JRJ1-1"/>
    <property type="nucleotide sequence ID" value="NM_165518.3"/>
</dbReference>
<dbReference type="RefSeq" id="NP_724548.1">
    <molecule id="Q7JRJ1-1"/>
    <property type="nucleotide sequence ID" value="NM_165519.3"/>
</dbReference>
<dbReference type="RefSeq" id="NP_724550.1">
    <molecule id="Q7JRJ1-2"/>
    <property type="nucleotide sequence ID" value="NM_165521.3"/>
</dbReference>
<dbReference type="SMR" id="Q7JRJ1"/>
<dbReference type="BioGRID" id="61540">
    <property type="interactions" value="29"/>
</dbReference>
<dbReference type="ComplexPortal" id="CPX-2710">
    <property type="entry name" value="Little elongation complex"/>
</dbReference>
<dbReference type="ComplexPortal" id="CPX-2711">
    <property type="entry name" value="Super elongation complex"/>
</dbReference>
<dbReference type="FunCoup" id="Q7JRJ1">
    <property type="interactions" value="373"/>
</dbReference>
<dbReference type="IntAct" id="Q7JRJ1">
    <property type="interactions" value="16"/>
</dbReference>
<dbReference type="STRING" id="7227.FBpp0088079"/>
<dbReference type="iPTMnet" id="Q7JRJ1"/>
<dbReference type="PaxDb" id="7227-FBpp0088079"/>
<dbReference type="DNASU" id="35660"/>
<dbReference type="EnsemblMetazoa" id="FBtr0089006">
    <molecule id="Q7JRJ1-1"/>
    <property type="protein sequence ID" value="FBpp0088078"/>
    <property type="gene ID" value="FBgn0033166"/>
</dbReference>
<dbReference type="EnsemblMetazoa" id="FBtr0089007">
    <molecule id="Q7JRJ1-1"/>
    <property type="protein sequence ID" value="FBpp0088079"/>
    <property type="gene ID" value="FBgn0033166"/>
</dbReference>
<dbReference type="EnsemblMetazoa" id="FBtr0089008">
    <molecule id="Q7JRJ1-1"/>
    <property type="protein sequence ID" value="FBpp0088080"/>
    <property type="gene ID" value="FBgn0033166"/>
</dbReference>
<dbReference type="EnsemblMetazoa" id="FBtr0089009">
    <molecule id="Q7JRJ1-2"/>
    <property type="protein sequence ID" value="FBpp0088081"/>
    <property type="gene ID" value="FBgn0033166"/>
</dbReference>
<dbReference type="GeneID" id="35660"/>
<dbReference type="KEGG" id="dme:Dmel_CG11166"/>
<dbReference type="UCSC" id="CG11166-RA">
    <molecule id="Q7JRJ1-1"/>
    <property type="organism name" value="d. melanogaster"/>
</dbReference>
<dbReference type="UCSC" id="CG11166-RB">
    <property type="organism name" value="d. melanogaster"/>
</dbReference>
<dbReference type="AGR" id="FB:FBgn0033166"/>
<dbReference type="CTD" id="35660"/>
<dbReference type="FlyBase" id="FBgn0033166">
    <property type="gene designation" value="Eaf"/>
</dbReference>
<dbReference type="VEuPathDB" id="VectorBase:FBgn0033166"/>
<dbReference type="eggNOG" id="KOG4795">
    <property type="taxonomic scope" value="Eukaryota"/>
</dbReference>
<dbReference type="GeneTree" id="ENSGT00390000017724"/>
<dbReference type="HOGENOM" id="CLU_025755_2_1_1"/>
<dbReference type="InParanoid" id="Q7JRJ1"/>
<dbReference type="OMA" id="SSHMGKQ"/>
<dbReference type="OrthoDB" id="125903at2759"/>
<dbReference type="PhylomeDB" id="Q7JRJ1"/>
<dbReference type="Reactome" id="R-DME-112382">
    <property type="pathway name" value="Formation of RNA Pol II elongation complex"/>
</dbReference>
<dbReference type="Reactome" id="R-DME-674695">
    <property type="pathway name" value="RNA Polymerase II Pre-transcription Events"/>
</dbReference>
<dbReference type="Reactome" id="R-DME-75955">
    <property type="pathway name" value="RNA Polymerase II Transcription Elongation"/>
</dbReference>
<dbReference type="BioGRID-ORCS" id="35660">
    <property type="hits" value="0 hits in 3 CRISPR screens"/>
</dbReference>
<dbReference type="GenomeRNAi" id="35660"/>
<dbReference type="PRO" id="PR:Q7JRJ1"/>
<dbReference type="Proteomes" id="UP000000803">
    <property type="component" value="Chromosome 2R"/>
</dbReference>
<dbReference type="Bgee" id="FBgn0033166">
    <property type="expression patterns" value="Expressed in egg cell and 177 other cell types or tissues"/>
</dbReference>
<dbReference type="GO" id="GO:0005654">
    <property type="term" value="C:nucleoplasm"/>
    <property type="evidence" value="ECO:0007005"/>
    <property type="project" value="FlyBase"/>
</dbReference>
<dbReference type="GO" id="GO:0032783">
    <property type="term" value="C:super elongation complex"/>
    <property type="evidence" value="ECO:0000353"/>
    <property type="project" value="FlyBase"/>
</dbReference>
<dbReference type="GO" id="GO:0008023">
    <property type="term" value="C:transcription elongation factor complex"/>
    <property type="evidence" value="ECO:0000314"/>
    <property type="project" value="UniProtKB"/>
</dbReference>
<dbReference type="GO" id="GO:0003711">
    <property type="term" value="F:transcription elongation factor activity"/>
    <property type="evidence" value="ECO:0000318"/>
    <property type="project" value="GO_Central"/>
</dbReference>
<dbReference type="GO" id="GO:0034605">
    <property type="term" value="P:cellular response to heat"/>
    <property type="evidence" value="ECO:0000315"/>
    <property type="project" value="FlyBase"/>
</dbReference>
<dbReference type="GO" id="GO:0045893">
    <property type="term" value="P:positive regulation of DNA-templated transcription"/>
    <property type="evidence" value="ECO:0000315"/>
    <property type="project" value="UniProtKB"/>
</dbReference>
<dbReference type="GO" id="GO:0006368">
    <property type="term" value="P:transcription elongation by RNA polymerase II"/>
    <property type="evidence" value="ECO:0000318"/>
    <property type="project" value="GO_Central"/>
</dbReference>
<dbReference type="GO" id="GO:0042060">
    <property type="term" value="P:wound healing"/>
    <property type="evidence" value="ECO:0007001"/>
    <property type="project" value="FlyBase"/>
</dbReference>
<dbReference type="InterPro" id="IPR027093">
    <property type="entry name" value="EAF_fam"/>
</dbReference>
<dbReference type="InterPro" id="IPR019194">
    <property type="entry name" value="Tscrpt_elong_fac_Eaf_N"/>
</dbReference>
<dbReference type="PANTHER" id="PTHR15970">
    <property type="entry name" value="ELL-ASSOCIATED FACTOR EAF"/>
    <property type="match status" value="1"/>
</dbReference>
<dbReference type="PANTHER" id="PTHR15970:SF2">
    <property type="entry name" value="ELL-ASSOCIATED FACTOR EAF"/>
    <property type="match status" value="1"/>
</dbReference>
<dbReference type="Pfam" id="PF09816">
    <property type="entry name" value="EAF"/>
    <property type="match status" value="1"/>
</dbReference>
<comment type="function">
    <text evidence="4">Promotes transcriptional elongation by Su(Tpl)/ELL. Essential for development.</text>
</comment>
<comment type="subunit">
    <text evidence="5">Component of the little elongation complex, at least composed of Ell, Eaf, Ice1 and Ice2.</text>
</comment>
<comment type="subcellular location">
    <subcellularLocation>
        <location evidence="1">Nucleus</location>
    </subcellularLocation>
</comment>
<comment type="alternative products">
    <event type="alternative splicing"/>
    <isoform>
        <id>Q7JRJ1-1</id>
        <name evidence="8">A</name>
        <name>C</name>
        <name>D</name>
        <sequence type="displayed"/>
    </isoform>
    <isoform>
        <id>Q7JRJ1-2</id>
        <name evidence="8">B</name>
        <sequence type="described" ref="VSP_035952"/>
    </isoform>
</comment>
<comment type="disruption phenotype">
    <text evidence="4">Loss of adult progeny and reduced male-female sex ratio.</text>
</comment>
<comment type="similarity">
    <text evidence="7">Belongs to the EAF family.</text>
</comment>
<feature type="chain" id="PRO_0000355634" description="Ell-associated factor Eaf">
    <location>
        <begin position="1"/>
        <end position="504"/>
    </location>
</feature>
<feature type="region of interest" description="Disordered" evidence="2">
    <location>
        <begin position="174"/>
        <end position="218"/>
    </location>
</feature>
<feature type="region of interest" description="Disordered" evidence="2">
    <location>
        <begin position="242"/>
        <end position="504"/>
    </location>
</feature>
<feature type="compositionally biased region" description="Polar residues" evidence="2">
    <location>
        <begin position="174"/>
        <end position="184"/>
    </location>
</feature>
<feature type="compositionally biased region" description="Low complexity" evidence="2">
    <location>
        <begin position="200"/>
        <end position="213"/>
    </location>
</feature>
<feature type="compositionally biased region" description="Polar residues" evidence="2">
    <location>
        <begin position="248"/>
        <end position="271"/>
    </location>
</feature>
<feature type="compositionally biased region" description="Low complexity" evidence="2">
    <location>
        <begin position="304"/>
        <end position="334"/>
    </location>
</feature>
<feature type="compositionally biased region" description="Acidic residues" evidence="2">
    <location>
        <begin position="383"/>
        <end position="398"/>
    </location>
</feature>
<feature type="compositionally biased region" description="Low complexity" evidence="2">
    <location>
        <begin position="404"/>
        <end position="438"/>
    </location>
</feature>
<feature type="compositionally biased region" description="Low complexity" evidence="2">
    <location>
        <begin position="455"/>
        <end position="473"/>
    </location>
</feature>
<feature type="compositionally biased region" description="Low complexity" evidence="2">
    <location>
        <begin position="488"/>
        <end position="498"/>
    </location>
</feature>
<feature type="modified residue" description="Phosphoserine" evidence="3">
    <location>
        <position position="194"/>
    </location>
</feature>
<feature type="splice variant" id="VSP_035952" description="In isoform B." evidence="6">
    <location>
        <begin position="1"/>
        <end position="54"/>
    </location>
</feature>
<sequence>MMMTKQKNSLAERLNIGEEVRELKLGATFNPKNTSTAFHTIKYDFKPASVDTSRMASVDVGSNNQVTVTVPNSESSGVPHTVYKGNQREYAKECLMIYDKETGAITIEKLNHNIQVKKTRNEVTNKSVQLPGQNMGQPHNQGANGAAPVAVPVPGQGSGTAPKMENSTMRISTKTKVSTGSRRNNIIDFKPRNSPMQQNSPSRPVPVHRSPQSAPAWDANNAQQTLPSIPLITDDDDFGLRAALHNSGHGNTSGTAAGQPDFGSTSSSTHIGKQRQAPPHGHGKRQQMHQRLSPPMAQQQQPSNYGRGYNGGHNHAQQQQHHQRNSPQQQRPSAYGHGNSMPIDVDSSREHELTSQSVAQAAAALEQQIGGALSASSSSSESDSSDSDSGSDSDDSTEDDRSTQGQQQDHQQQQQQQHQVYQNHKHTQQQVAQQHHNQLPNLGLGSISPAYGSSHQQQHQQQMLPHQQKQKQQSGIYASNGGFPNDFLQNDLQLSSNSSDDDDD</sequence>